<dbReference type="EMBL" id="CP000920">
    <property type="protein sequence ID" value="ACO20509.1"/>
    <property type="molecule type" value="Genomic_DNA"/>
</dbReference>
<dbReference type="RefSeq" id="WP_000351967.1">
    <property type="nucleotide sequence ID" value="NC_012467.1"/>
</dbReference>
<dbReference type="SMR" id="C1CNE7"/>
<dbReference type="GeneID" id="93738863"/>
<dbReference type="KEGG" id="spp:SPP_2226"/>
<dbReference type="HOGENOM" id="CLU_108696_19_0_9"/>
<dbReference type="UniPathway" id="UPA00556"/>
<dbReference type="GO" id="GO:0005737">
    <property type="term" value="C:cytoplasm"/>
    <property type="evidence" value="ECO:0007669"/>
    <property type="project" value="UniProtKB-SubCell"/>
</dbReference>
<dbReference type="GO" id="GO:0036370">
    <property type="term" value="F:D-alanyl carrier activity"/>
    <property type="evidence" value="ECO:0007669"/>
    <property type="project" value="UniProtKB-UniRule"/>
</dbReference>
<dbReference type="GO" id="GO:0071555">
    <property type="term" value="P:cell wall organization"/>
    <property type="evidence" value="ECO:0007669"/>
    <property type="project" value="UniProtKB-KW"/>
</dbReference>
<dbReference type="GO" id="GO:0070395">
    <property type="term" value="P:lipoteichoic acid biosynthetic process"/>
    <property type="evidence" value="ECO:0007669"/>
    <property type="project" value="UniProtKB-UniRule"/>
</dbReference>
<dbReference type="Gene3D" id="1.10.1200.10">
    <property type="entry name" value="ACP-like"/>
    <property type="match status" value="1"/>
</dbReference>
<dbReference type="HAMAP" id="MF_00565">
    <property type="entry name" value="DltC"/>
    <property type="match status" value="1"/>
</dbReference>
<dbReference type="InterPro" id="IPR036736">
    <property type="entry name" value="ACP-like_sf"/>
</dbReference>
<dbReference type="InterPro" id="IPR003230">
    <property type="entry name" value="DltC"/>
</dbReference>
<dbReference type="InterPro" id="IPR009081">
    <property type="entry name" value="PP-bd_ACP"/>
</dbReference>
<dbReference type="NCBIfam" id="TIGR01688">
    <property type="entry name" value="dltC"/>
    <property type="match status" value="1"/>
</dbReference>
<dbReference type="NCBIfam" id="NF003464">
    <property type="entry name" value="PRK05087.1"/>
    <property type="match status" value="1"/>
</dbReference>
<dbReference type="Pfam" id="PF00550">
    <property type="entry name" value="PP-binding"/>
    <property type="match status" value="1"/>
</dbReference>
<dbReference type="SUPFAM" id="SSF47336">
    <property type="entry name" value="ACP-like"/>
    <property type="match status" value="1"/>
</dbReference>
<dbReference type="PROSITE" id="PS50075">
    <property type="entry name" value="CARRIER"/>
    <property type="match status" value="1"/>
</dbReference>
<keyword id="KW-0961">Cell wall biogenesis/degradation</keyword>
<keyword id="KW-0963">Cytoplasm</keyword>
<keyword id="KW-0596">Phosphopantetheine</keyword>
<keyword id="KW-0597">Phosphoprotein</keyword>
<reference key="1">
    <citation type="journal article" date="2010" name="Genome Biol.">
        <title>Structure and dynamics of the pan-genome of Streptococcus pneumoniae and closely related species.</title>
        <authorList>
            <person name="Donati C."/>
            <person name="Hiller N.L."/>
            <person name="Tettelin H."/>
            <person name="Muzzi A."/>
            <person name="Croucher N.J."/>
            <person name="Angiuoli S.V."/>
            <person name="Oggioni M."/>
            <person name="Dunning Hotopp J.C."/>
            <person name="Hu F.Z."/>
            <person name="Riley D.R."/>
            <person name="Covacci A."/>
            <person name="Mitchell T.J."/>
            <person name="Bentley S.D."/>
            <person name="Kilian M."/>
            <person name="Ehrlich G.D."/>
            <person name="Rappuoli R."/>
            <person name="Moxon E.R."/>
            <person name="Masignani V."/>
        </authorList>
    </citation>
    <scope>NUCLEOTIDE SEQUENCE [LARGE SCALE GENOMIC DNA]</scope>
    <source>
        <strain>P1031</strain>
    </source>
</reference>
<gene>
    <name evidence="1" type="primary">dltC</name>
    <name type="ordered locus">SPP_2226</name>
</gene>
<comment type="function">
    <text evidence="1">Carrier protein involved in the D-alanylation of lipoteichoic acid (LTA). The loading of thioester-linked D-alanine onto DltC is catalyzed by D-alanine--D-alanyl carrier protein ligase DltA. The DltC-carried D-alanyl group is further transferred to cell membrane phosphatidylglycerol (PG) by forming an ester bond, probably catalyzed by DltD. D-alanylation of LTA plays an important role in modulating the properties of the cell wall in Gram-positive bacteria, influencing the net charge of the cell wall.</text>
</comment>
<comment type="pathway">
    <text evidence="1">Cell wall biogenesis; lipoteichoic acid biosynthesis.</text>
</comment>
<comment type="subcellular location">
    <subcellularLocation>
        <location evidence="1">Cytoplasm</location>
    </subcellularLocation>
</comment>
<comment type="PTM">
    <text evidence="1">4'-phosphopantetheine is transferred from CoA to a specific serine of apo-DCP.</text>
</comment>
<comment type="similarity">
    <text evidence="1">Belongs to the DltC family.</text>
</comment>
<feature type="chain" id="PRO_1000146801" description="D-alanyl carrier protein">
    <location>
        <begin position="1"/>
        <end position="79"/>
    </location>
</feature>
<feature type="domain" description="Carrier" evidence="1">
    <location>
        <begin position="1"/>
        <end position="77"/>
    </location>
</feature>
<feature type="modified residue" description="O-(pantetheine 4'-phosphoryl)serine" evidence="1">
    <location>
        <position position="35"/>
    </location>
</feature>
<protein>
    <recommendedName>
        <fullName evidence="1">D-alanyl carrier protein</fullName>
        <shortName evidence="1">DCP</shortName>
    </recommendedName>
    <alternativeName>
        <fullName evidence="1">D-alanine--poly(phosphoribitol) ligase subunit 2</fullName>
    </alternativeName>
</protein>
<accession>C1CNE7</accession>
<proteinExistence type="inferred from homology"/>
<name>DLTC_STRZP</name>
<evidence type="ECO:0000255" key="1">
    <source>
        <dbReference type="HAMAP-Rule" id="MF_00565"/>
    </source>
</evidence>
<organism>
    <name type="scientific">Streptococcus pneumoniae (strain P1031)</name>
    <dbReference type="NCBI Taxonomy" id="488223"/>
    <lineage>
        <taxon>Bacteria</taxon>
        <taxon>Bacillati</taxon>
        <taxon>Bacillota</taxon>
        <taxon>Bacilli</taxon>
        <taxon>Lactobacillales</taxon>
        <taxon>Streptococcaceae</taxon>
        <taxon>Streptococcus</taxon>
    </lineage>
</organism>
<sequence>MDIKSEVIEIIDELFMEDVSDMMDEDLFDAGVLDSMGTVELIVEIENRFDIRVPVTEFGRDDWNTANKIIAGIVELQNA</sequence>